<proteinExistence type="inferred from homology"/>
<comment type="function">
    <text evidence="1">Catalyzes the NADPH-dependent rearrangement and reduction of 1-deoxy-D-xylulose-5-phosphate (DXP) to 2-C-methyl-D-erythritol 4-phosphate (MEP).</text>
</comment>
<comment type="catalytic activity">
    <reaction evidence="1">
        <text>2-C-methyl-D-erythritol 4-phosphate + NADP(+) = 1-deoxy-D-xylulose 5-phosphate + NADPH + H(+)</text>
        <dbReference type="Rhea" id="RHEA:13717"/>
        <dbReference type="ChEBI" id="CHEBI:15378"/>
        <dbReference type="ChEBI" id="CHEBI:57783"/>
        <dbReference type="ChEBI" id="CHEBI:57792"/>
        <dbReference type="ChEBI" id="CHEBI:58262"/>
        <dbReference type="ChEBI" id="CHEBI:58349"/>
        <dbReference type="EC" id="1.1.1.267"/>
    </reaction>
    <physiologicalReaction direction="right-to-left" evidence="1">
        <dbReference type="Rhea" id="RHEA:13719"/>
    </physiologicalReaction>
</comment>
<comment type="cofactor">
    <cofactor evidence="1">
        <name>Mg(2+)</name>
        <dbReference type="ChEBI" id="CHEBI:18420"/>
    </cofactor>
    <cofactor evidence="1">
        <name>Mn(2+)</name>
        <dbReference type="ChEBI" id="CHEBI:29035"/>
    </cofactor>
</comment>
<comment type="pathway">
    <text evidence="1">Isoprenoid biosynthesis; isopentenyl diphosphate biosynthesis via DXP pathway; isopentenyl diphosphate from 1-deoxy-D-xylulose 5-phosphate: step 1/6.</text>
</comment>
<comment type="similarity">
    <text evidence="1">Belongs to the DXR family.</text>
</comment>
<name>DXR_CLOBB</name>
<protein>
    <recommendedName>
        <fullName evidence="1">1-deoxy-D-xylulose 5-phosphate reductoisomerase</fullName>
        <shortName evidence="1">DXP reductoisomerase</shortName>
        <ecNumber evidence="1">1.1.1.267</ecNumber>
    </recommendedName>
    <alternativeName>
        <fullName evidence="1">1-deoxyxylulose-5-phosphate reductoisomerase</fullName>
    </alternativeName>
    <alternativeName>
        <fullName evidence="1">2-C-methyl-D-erythritol 4-phosphate synthase</fullName>
    </alternativeName>
</protein>
<organism>
    <name type="scientific">Clostridium botulinum (strain Eklund 17B / Type B)</name>
    <dbReference type="NCBI Taxonomy" id="935198"/>
    <lineage>
        <taxon>Bacteria</taxon>
        <taxon>Bacillati</taxon>
        <taxon>Bacillota</taxon>
        <taxon>Clostridia</taxon>
        <taxon>Eubacteriales</taxon>
        <taxon>Clostridiaceae</taxon>
        <taxon>Clostridium</taxon>
    </lineage>
</organism>
<accession>B2TJ47</accession>
<feature type="chain" id="PRO_1000098487" description="1-deoxy-D-xylulose 5-phosphate reductoisomerase">
    <location>
        <begin position="1"/>
        <end position="385"/>
    </location>
</feature>
<feature type="binding site" evidence="1">
    <location>
        <position position="10"/>
    </location>
    <ligand>
        <name>NADPH</name>
        <dbReference type="ChEBI" id="CHEBI:57783"/>
    </ligand>
</feature>
<feature type="binding site" evidence="1">
    <location>
        <position position="11"/>
    </location>
    <ligand>
        <name>NADPH</name>
        <dbReference type="ChEBI" id="CHEBI:57783"/>
    </ligand>
</feature>
<feature type="binding site" evidence="1">
    <location>
        <position position="12"/>
    </location>
    <ligand>
        <name>NADPH</name>
        <dbReference type="ChEBI" id="CHEBI:57783"/>
    </ligand>
</feature>
<feature type="binding site" evidence="1">
    <location>
        <position position="13"/>
    </location>
    <ligand>
        <name>NADPH</name>
        <dbReference type="ChEBI" id="CHEBI:57783"/>
    </ligand>
</feature>
<feature type="binding site" evidence="1">
    <location>
        <position position="124"/>
    </location>
    <ligand>
        <name>NADPH</name>
        <dbReference type="ChEBI" id="CHEBI:57783"/>
    </ligand>
</feature>
<feature type="binding site" evidence="1">
    <location>
        <position position="125"/>
    </location>
    <ligand>
        <name>1-deoxy-D-xylulose 5-phosphate</name>
        <dbReference type="ChEBI" id="CHEBI:57792"/>
    </ligand>
</feature>
<feature type="binding site" evidence="1">
    <location>
        <position position="126"/>
    </location>
    <ligand>
        <name>NADPH</name>
        <dbReference type="ChEBI" id="CHEBI:57783"/>
    </ligand>
</feature>
<feature type="binding site" evidence="1">
    <location>
        <position position="150"/>
    </location>
    <ligand>
        <name>Mn(2+)</name>
        <dbReference type="ChEBI" id="CHEBI:29035"/>
    </ligand>
</feature>
<feature type="binding site" evidence="1">
    <location>
        <position position="151"/>
    </location>
    <ligand>
        <name>1-deoxy-D-xylulose 5-phosphate</name>
        <dbReference type="ChEBI" id="CHEBI:57792"/>
    </ligand>
</feature>
<feature type="binding site" evidence="1">
    <location>
        <position position="152"/>
    </location>
    <ligand>
        <name>1-deoxy-D-xylulose 5-phosphate</name>
        <dbReference type="ChEBI" id="CHEBI:57792"/>
    </ligand>
</feature>
<feature type="binding site" evidence="1">
    <location>
        <position position="152"/>
    </location>
    <ligand>
        <name>Mn(2+)</name>
        <dbReference type="ChEBI" id="CHEBI:29035"/>
    </ligand>
</feature>
<feature type="binding site" evidence="1">
    <location>
        <position position="176"/>
    </location>
    <ligand>
        <name>1-deoxy-D-xylulose 5-phosphate</name>
        <dbReference type="ChEBI" id="CHEBI:57792"/>
    </ligand>
</feature>
<feature type="binding site" evidence="1">
    <location>
        <position position="199"/>
    </location>
    <ligand>
        <name>1-deoxy-D-xylulose 5-phosphate</name>
        <dbReference type="ChEBI" id="CHEBI:57792"/>
    </ligand>
</feature>
<feature type="binding site" evidence="1">
    <location>
        <position position="205"/>
    </location>
    <ligand>
        <name>NADPH</name>
        <dbReference type="ChEBI" id="CHEBI:57783"/>
    </ligand>
</feature>
<feature type="binding site" evidence="1">
    <location>
        <position position="212"/>
    </location>
    <ligand>
        <name>1-deoxy-D-xylulose 5-phosphate</name>
        <dbReference type="ChEBI" id="CHEBI:57792"/>
    </ligand>
</feature>
<feature type="binding site" evidence="1">
    <location>
        <position position="217"/>
    </location>
    <ligand>
        <name>1-deoxy-D-xylulose 5-phosphate</name>
        <dbReference type="ChEBI" id="CHEBI:57792"/>
    </ligand>
</feature>
<feature type="binding site" evidence="1">
    <location>
        <position position="218"/>
    </location>
    <ligand>
        <name>1-deoxy-D-xylulose 5-phosphate</name>
        <dbReference type="ChEBI" id="CHEBI:57792"/>
    </ligand>
</feature>
<feature type="binding site" evidence="1">
    <location>
        <position position="221"/>
    </location>
    <ligand>
        <name>1-deoxy-D-xylulose 5-phosphate</name>
        <dbReference type="ChEBI" id="CHEBI:57792"/>
    </ligand>
</feature>
<feature type="binding site" evidence="1">
    <location>
        <position position="221"/>
    </location>
    <ligand>
        <name>Mn(2+)</name>
        <dbReference type="ChEBI" id="CHEBI:29035"/>
    </ligand>
</feature>
<dbReference type="EC" id="1.1.1.267" evidence="1"/>
<dbReference type="EMBL" id="CP001056">
    <property type="protein sequence ID" value="ACD22759.1"/>
    <property type="molecule type" value="Genomic_DNA"/>
</dbReference>
<dbReference type="SMR" id="B2TJ47"/>
<dbReference type="KEGG" id="cbk:CLL_A1265"/>
<dbReference type="PATRIC" id="fig|935198.13.peg.1211"/>
<dbReference type="HOGENOM" id="CLU_035714_4_0_9"/>
<dbReference type="UniPathway" id="UPA00056">
    <property type="reaction ID" value="UER00092"/>
</dbReference>
<dbReference type="Proteomes" id="UP000001195">
    <property type="component" value="Chromosome"/>
</dbReference>
<dbReference type="GO" id="GO:0030604">
    <property type="term" value="F:1-deoxy-D-xylulose-5-phosphate reductoisomerase activity"/>
    <property type="evidence" value="ECO:0007669"/>
    <property type="project" value="UniProtKB-UniRule"/>
</dbReference>
<dbReference type="GO" id="GO:0030145">
    <property type="term" value="F:manganese ion binding"/>
    <property type="evidence" value="ECO:0007669"/>
    <property type="project" value="TreeGrafter"/>
</dbReference>
<dbReference type="GO" id="GO:0070402">
    <property type="term" value="F:NADPH binding"/>
    <property type="evidence" value="ECO:0007669"/>
    <property type="project" value="InterPro"/>
</dbReference>
<dbReference type="GO" id="GO:0051484">
    <property type="term" value="P:isopentenyl diphosphate biosynthetic process, methylerythritol 4-phosphate pathway involved in terpenoid biosynthetic process"/>
    <property type="evidence" value="ECO:0007669"/>
    <property type="project" value="TreeGrafter"/>
</dbReference>
<dbReference type="FunFam" id="3.40.50.720:FF:000045">
    <property type="entry name" value="1-deoxy-D-xylulose 5-phosphate reductoisomerase"/>
    <property type="match status" value="1"/>
</dbReference>
<dbReference type="Gene3D" id="1.10.1740.10">
    <property type="match status" value="1"/>
</dbReference>
<dbReference type="Gene3D" id="3.40.50.720">
    <property type="entry name" value="NAD(P)-binding Rossmann-like Domain"/>
    <property type="match status" value="1"/>
</dbReference>
<dbReference type="HAMAP" id="MF_00183">
    <property type="entry name" value="DXP_reductoisom"/>
    <property type="match status" value="1"/>
</dbReference>
<dbReference type="InterPro" id="IPR003821">
    <property type="entry name" value="DXP_reductoisomerase"/>
</dbReference>
<dbReference type="InterPro" id="IPR013644">
    <property type="entry name" value="DXP_reductoisomerase_C"/>
</dbReference>
<dbReference type="InterPro" id="IPR013512">
    <property type="entry name" value="DXP_reductoisomerase_N"/>
</dbReference>
<dbReference type="InterPro" id="IPR026877">
    <property type="entry name" value="DXPR_C"/>
</dbReference>
<dbReference type="InterPro" id="IPR036169">
    <property type="entry name" value="DXPR_C_sf"/>
</dbReference>
<dbReference type="InterPro" id="IPR036291">
    <property type="entry name" value="NAD(P)-bd_dom_sf"/>
</dbReference>
<dbReference type="NCBIfam" id="TIGR00243">
    <property type="entry name" value="Dxr"/>
    <property type="match status" value="1"/>
</dbReference>
<dbReference type="NCBIfam" id="NF009114">
    <property type="entry name" value="PRK12464.1"/>
    <property type="match status" value="1"/>
</dbReference>
<dbReference type="PANTHER" id="PTHR30525">
    <property type="entry name" value="1-DEOXY-D-XYLULOSE 5-PHOSPHATE REDUCTOISOMERASE"/>
    <property type="match status" value="1"/>
</dbReference>
<dbReference type="PANTHER" id="PTHR30525:SF0">
    <property type="entry name" value="1-DEOXY-D-XYLULOSE 5-PHOSPHATE REDUCTOISOMERASE, CHLOROPLASTIC"/>
    <property type="match status" value="1"/>
</dbReference>
<dbReference type="Pfam" id="PF08436">
    <property type="entry name" value="DXP_redisom_C"/>
    <property type="match status" value="1"/>
</dbReference>
<dbReference type="Pfam" id="PF02670">
    <property type="entry name" value="DXP_reductoisom"/>
    <property type="match status" value="1"/>
</dbReference>
<dbReference type="Pfam" id="PF13288">
    <property type="entry name" value="DXPR_C"/>
    <property type="match status" value="1"/>
</dbReference>
<dbReference type="PIRSF" id="PIRSF006205">
    <property type="entry name" value="Dxp_reductismrs"/>
    <property type="match status" value="1"/>
</dbReference>
<dbReference type="SUPFAM" id="SSF69055">
    <property type="entry name" value="1-deoxy-D-xylulose-5-phosphate reductoisomerase, C-terminal domain"/>
    <property type="match status" value="1"/>
</dbReference>
<dbReference type="SUPFAM" id="SSF55347">
    <property type="entry name" value="Glyceraldehyde-3-phosphate dehydrogenase-like, C-terminal domain"/>
    <property type="match status" value="1"/>
</dbReference>
<dbReference type="SUPFAM" id="SSF51735">
    <property type="entry name" value="NAD(P)-binding Rossmann-fold domains"/>
    <property type="match status" value="1"/>
</dbReference>
<gene>
    <name evidence="1" type="primary">dxr</name>
    <name type="ordered locus">CLL_A1265</name>
</gene>
<evidence type="ECO:0000255" key="1">
    <source>
        <dbReference type="HAMAP-Rule" id="MF_00183"/>
    </source>
</evidence>
<sequence length="385" mass="42817">MKKLSILGVTGSIGTQALDVIKKSNGELKLIGATANSSVNKMIEIIEEFNPKYVGMMDKNSADKLEKYCKERNKQTIVLSQMEGLNKIASLEEIDIVLTSLVGMIGLEPTLEAIKAKKDIALANKETLVVAGELVMSEAKKNNVKILPVDSEHSAIYQSLRGNDLKTLNKIILTASGGPFRGKKLCDLNDIGVDDALNHPKWNMGRKISIDSATLMNKGLEVIEAHWLFNCDYDNIQVVIHPQSVVHSMVEYCDGSIIAQLGAADMRLPIQYAFNYTERKNLIAKTLDFYEVAQLTFEKPDLETFKPLKLAFKAGKQGGLMPTILNGANEAAVALFLDEKIEFLDIFNIIENCMNTFEEETKKPLTLENIIELDKKVKKYVVDMK</sequence>
<reference key="1">
    <citation type="submission" date="2008-04" db="EMBL/GenBank/DDBJ databases">
        <title>Complete sequence of Clostridium botulinum strain Eklund.</title>
        <authorList>
            <person name="Brinkac L.M."/>
            <person name="Brown J.L."/>
            <person name="Bruce D."/>
            <person name="Detter C."/>
            <person name="Munk C."/>
            <person name="Smith L.A."/>
            <person name="Smith T.J."/>
            <person name="Sutton G."/>
            <person name="Brettin T.S."/>
        </authorList>
    </citation>
    <scope>NUCLEOTIDE SEQUENCE [LARGE SCALE GENOMIC DNA]</scope>
    <source>
        <strain>Eklund 17B / Type B</strain>
    </source>
</reference>
<keyword id="KW-0414">Isoprene biosynthesis</keyword>
<keyword id="KW-0464">Manganese</keyword>
<keyword id="KW-0479">Metal-binding</keyword>
<keyword id="KW-0521">NADP</keyword>
<keyword id="KW-0560">Oxidoreductase</keyword>